<proteinExistence type="inferred from homology"/>
<evidence type="ECO:0000250" key="1"/>
<evidence type="ECO:0000256" key="2">
    <source>
        <dbReference type="SAM" id="MobiDB-lite"/>
    </source>
</evidence>
<evidence type="ECO:0000305" key="3"/>
<organismHost>
    <name type="scientific">Homo sapiens</name>
    <name type="common">Human</name>
    <dbReference type="NCBI Taxonomy" id="9606"/>
</organismHost>
<comment type="PTM">
    <text evidence="1">Phosphorylated by ORF47 protein.</text>
</comment>
<comment type="similarity">
    <text evidence="3">Belongs to the varicellovirus ORF32 protein family.</text>
</comment>
<organism>
    <name type="scientific">Varicella-zoster virus (strain Dumas)</name>
    <name type="common">HHV-3</name>
    <name type="synonym">Human herpesvirus 3</name>
    <dbReference type="NCBI Taxonomy" id="10338"/>
    <lineage>
        <taxon>Viruses</taxon>
        <taxon>Duplodnaviria</taxon>
        <taxon>Heunggongvirae</taxon>
        <taxon>Peploviricota</taxon>
        <taxon>Herviviricetes</taxon>
        <taxon>Herpesvirales</taxon>
        <taxon>Orthoherpesviridae</taxon>
        <taxon>Alphaherpesvirinae</taxon>
        <taxon>Varicellovirus</taxon>
        <taxon>Varicellovirus humanalpha3</taxon>
        <taxon>Human herpesvirus 3</taxon>
    </lineage>
</organism>
<sequence length="143" mass="15981">MESSNINALQQPSSIAHHPSKQCASSLNETVKDSPPAIYEDRLEHTPVQLPRDGTPRDVCSVGQLTCRACATKPFRLNRDSQYDYLNTCPGGRHISLALEIITGRWVCIPRVFPDTPEEKWMAPYIIPDREQPSSGDEDSDTD</sequence>
<gene>
    <name type="ORF">ORF32</name>
</gene>
<feature type="chain" id="PRO_0000116162" description="Phosphoprotein 32">
    <location>
        <begin position="1"/>
        <end position="143"/>
    </location>
</feature>
<feature type="region of interest" description="Disordered" evidence="2">
    <location>
        <begin position="1"/>
        <end position="32"/>
    </location>
</feature>
<feature type="compositionally biased region" description="Polar residues" evidence="2">
    <location>
        <begin position="1"/>
        <end position="14"/>
    </location>
</feature>
<reference key="1">
    <citation type="journal article" date="1986" name="J. Gen. Virol.">
        <title>The complete DNA sequence of varicella-zoster virus.</title>
        <authorList>
            <person name="Davison A.J."/>
            <person name="Scott J.E."/>
        </authorList>
    </citation>
    <scope>NUCLEOTIDE SEQUENCE [LARGE SCALE GENOMIC DNA]</scope>
</reference>
<protein>
    <recommendedName>
        <fullName>Phosphoprotein 32</fullName>
    </recommendedName>
    <alternativeName>
        <fullName>ORF32 Phosphoprotein</fullName>
    </alternativeName>
</protein>
<keyword id="KW-0597">Phosphoprotein</keyword>
<keyword id="KW-1185">Reference proteome</keyword>
<name>ORF32_VZVD</name>
<dbReference type="EMBL" id="X04370">
    <property type="protein sequence ID" value="CAA27915.1"/>
    <property type="molecule type" value="Genomic_DNA"/>
</dbReference>
<dbReference type="PIR" id="F27214">
    <property type="entry name" value="WZBE32"/>
</dbReference>
<dbReference type="SMR" id="P09285"/>
<dbReference type="Proteomes" id="UP000002602">
    <property type="component" value="Genome"/>
</dbReference>
<accession>P09285</accession>